<name>RL18_BUCAI</name>
<accession>P57575</accession>
<sequence>MIFSNKNKIISRIRRSMKTRCKIKKLGAIRLVVHRTSRHMYAQIISSKEAKVLVFASTLERKINCSLKYTGNKEAAAKIGKIIAERALSKGISHVSFDRSGFKYHGRVQVLAESAREVGLKF</sequence>
<reference key="1">
    <citation type="journal article" date="2000" name="Nature">
        <title>Genome sequence of the endocellular bacterial symbiont of aphids Buchnera sp. APS.</title>
        <authorList>
            <person name="Shigenobu S."/>
            <person name="Watanabe H."/>
            <person name="Hattori M."/>
            <person name="Sakaki Y."/>
            <person name="Ishikawa H."/>
        </authorList>
    </citation>
    <scope>NUCLEOTIDE SEQUENCE [LARGE SCALE GENOMIC DNA]</scope>
    <source>
        <strain>APS</strain>
    </source>
</reference>
<organism>
    <name type="scientific">Buchnera aphidicola subsp. Acyrthosiphon pisum (strain APS)</name>
    <name type="common">Acyrthosiphon pisum symbiotic bacterium</name>
    <dbReference type="NCBI Taxonomy" id="107806"/>
    <lineage>
        <taxon>Bacteria</taxon>
        <taxon>Pseudomonadati</taxon>
        <taxon>Pseudomonadota</taxon>
        <taxon>Gammaproteobacteria</taxon>
        <taxon>Enterobacterales</taxon>
        <taxon>Erwiniaceae</taxon>
        <taxon>Buchnera</taxon>
    </lineage>
</organism>
<protein>
    <recommendedName>
        <fullName evidence="1">Large ribosomal subunit protein uL18</fullName>
    </recommendedName>
    <alternativeName>
        <fullName evidence="2">50S ribosomal protein L18</fullName>
    </alternativeName>
</protein>
<keyword id="KW-1185">Reference proteome</keyword>
<keyword id="KW-0687">Ribonucleoprotein</keyword>
<keyword id="KW-0689">Ribosomal protein</keyword>
<keyword id="KW-0694">RNA-binding</keyword>
<keyword id="KW-0699">rRNA-binding</keyword>
<dbReference type="EMBL" id="BA000003">
    <property type="protein sequence ID" value="BAB13201.1"/>
    <property type="molecule type" value="Genomic_DNA"/>
</dbReference>
<dbReference type="RefSeq" id="NP_240315.1">
    <property type="nucleotide sequence ID" value="NC_002528.1"/>
</dbReference>
<dbReference type="RefSeq" id="WP_009874459.1">
    <property type="nucleotide sequence ID" value="NZ_AP036055.1"/>
</dbReference>
<dbReference type="SMR" id="P57575"/>
<dbReference type="STRING" id="563178.BUAP5A_501"/>
<dbReference type="EnsemblBacteria" id="BAB13201">
    <property type="protein sequence ID" value="BAB13201"/>
    <property type="gene ID" value="BAB13201"/>
</dbReference>
<dbReference type="KEGG" id="buc:BU508"/>
<dbReference type="PATRIC" id="fig|107806.10.peg.513"/>
<dbReference type="eggNOG" id="COG0256">
    <property type="taxonomic scope" value="Bacteria"/>
</dbReference>
<dbReference type="HOGENOM" id="CLU_098841_0_1_6"/>
<dbReference type="Proteomes" id="UP000001806">
    <property type="component" value="Chromosome"/>
</dbReference>
<dbReference type="GO" id="GO:0022625">
    <property type="term" value="C:cytosolic large ribosomal subunit"/>
    <property type="evidence" value="ECO:0007669"/>
    <property type="project" value="TreeGrafter"/>
</dbReference>
<dbReference type="GO" id="GO:0008097">
    <property type="term" value="F:5S rRNA binding"/>
    <property type="evidence" value="ECO:0007669"/>
    <property type="project" value="TreeGrafter"/>
</dbReference>
<dbReference type="GO" id="GO:0003735">
    <property type="term" value="F:structural constituent of ribosome"/>
    <property type="evidence" value="ECO:0007669"/>
    <property type="project" value="InterPro"/>
</dbReference>
<dbReference type="GO" id="GO:0006412">
    <property type="term" value="P:translation"/>
    <property type="evidence" value="ECO:0007669"/>
    <property type="project" value="UniProtKB-UniRule"/>
</dbReference>
<dbReference type="CDD" id="cd00432">
    <property type="entry name" value="Ribosomal_L18_L5e"/>
    <property type="match status" value="1"/>
</dbReference>
<dbReference type="FunFam" id="3.30.420.100:FF:000001">
    <property type="entry name" value="50S ribosomal protein L18"/>
    <property type="match status" value="1"/>
</dbReference>
<dbReference type="Gene3D" id="3.30.420.100">
    <property type="match status" value="1"/>
</dbReference>
<dbReference type="HAMAP" id="MF_01337_B">
    <property type="entry name" value="Ribosomal_uL18_B"/>
    <property type="match status" value="1"/>
</dbReference>
<dbReference type="InterPro" id="IPR004389">
    <property type="entry name" value="Ribosomal_uL18_bac-type"/>
</dbReference>
<dbReference type="InterPro" id="IPR005484">
    <property type="entry name" value="Ribosomal_uL18_bac/euk"/>
</dbReference>
<dbReference type="NCBIfam" id="TIGR00060">
    <property type="entry name" value="L18_bact"/>
    <property type="match status" value="1"/>
</dbReference>
<dbReference type="PANTHER" id="PTHR12899">
    <property type="entry name" value="39S RIBOSOMAL PROTEIN L18, MITOCHONDRIAL"/>
    <property type="match status" value="1"/>
</dbReference>
<dbReference type="PANTHER" id="PTHR12899:SF3">
    <property type="entry name" value="LARGE RIBOSOMAL SUBUNIT PROTEIN UL18M"/>
    <property type="match status" value="1"/>
</dbReference>
<dbReference type="Pfam" id="PF00861">
    <property type="entry name" value="Ribosomal_L18p"/>
    <property type="match status" value="1"/>
</dbReference>
<dbReference type="SUPFAM" id="SSF53137">
    <property type="entry name" value="Translational machinery components"/>
    <property type="match status" value="1"/>
</dbReference>
<comment type="function">
    <text evidence="1">This is one of the proteins that bind and probably mediate the attachment of the 5S RNA into the large ribosomal subunit, where it forms part of the central protuberance.</text>
</comment>
<comment type="subunit">
    <text evidence="1">Part of the 50S ribosomal subunit; part of the 5S rRNA/L5/L18/L25 subcomplex. Contacts the 5S and 23S rRNAs.</text>
</comment>
<comment type="similarity">
    <text evidence="1">Belongs to the universal ribosomal protein uL18 family.</text>
</comment>
<proteinExistence type="inferred from homology"/>
<evidence type="ECO:0000255" key="1">
    <source>
        <dbReference type="HAMAP-Rule" id="MF_01337"/>
    </source>
</evidence>
<evidence type="ECO:0000305" key="2"/>
<gene>
    <name evidence="1" type="primary">rplR</name>
    <name type="ordered locus">BU508</name>
</gene>
<feature type="chain" id="PRO_0000131231" description="Large ribosomal subunit protein uL18">
    <location>
        <begin position="1"/>
        <end position="122"/>
    </location>
</feature>